<dbReference type="EC" id="1.2.1.70" evidence="1"/>
<dbReference type="EMBL" id="AE000657">
    <property type="protein sequence ID" value="AAC07274.1"/>
    <property type="molecule type" value="Genomic_DNA"/>
</dbReference>
<dbReference type="PIR" id="G70410">
    <property type="entry name" value="G70410"/>
</dbReference>
<dbReference type="RefSeq" id="NP_213878.1">
    <property type="nucleotide sequence ID" value="NC_000918.1"/>
</dbReference>
<dbReference type="RefSeq" id="WP_010880816.1">
    <property type="nucleotide sequence ID" value="NC_000918.1"/>
</dbReference>
<dbReference type="SMR" id="O67314"/>
<dbReference type="FunCoup" id="O67314">
    <property type="interactions" value="315"/>
</dbReference>
<dbReference type="STRING" id="224324.aq_1279"/>
<dbReference type="EnsemblBacteria" id="AAC07274">
    <property type="protein sequence ID" value="AAC07274"/>
    <property type="gene ID" value="aq_1279"/>
</dbReference>
<dbReference type="KEGG" id="aae:aq_1279"/>
<dbReference type="PATRIC" id="fig|224324.8.peg.999"/>
<dbReference type="eggNOG" id="COG0373">
    <property type="taxonomic scope" value="Bacteria"/>
</dbReference>
<dbReference type="HOGENOM" id="CLU_035113_2_2_0"/>
<dbReference type="InParanoid" id="O67314"/>
<dbReference type="OrthoDB" id="110209at2"/>
<dbReference type="UniPathway" id="UPA00251">
    <property type="reaction ID" value="UER00316"/>
</dbReference>
<dbReference type="Proteomes" id="UP000000798">
    <property type="component" value="Chromosome"/>
</dbReference>
<dbReference type="GO" id="GO:0008883">
    <property type="term" value="F:glutamyl-tRNA reductase activity"/>
    <property type="evidence" value="ECO:0000318"/>
    <property type="project" value="GO_Central"/>
</dbReference>
<dbReference type="GO" id="GO:0050661">
    <property type="term" value="F:NADP binding"/>
    <property type="evidence" value="ECO:0007669"/>
    <property type="project" value="InterPro"/>
</dbReference>
<dbReference type="GO" id="GO:0019353">
    <property type="term" value="P:protoporphyrinogen IX biosynthetic process from glutamate"/>
    <property type="evidence" value="ECO:0000318"/>
    <property type="project" value="GO_Central"/>
</dbReference>
<dbReference type="CDD" id="cd05213">
    <property type="entry name" value="NAD_bind_Glutamyl_tRNA_reduct"/>
    <property type="match status" value="1"/>
</dbReference>
<dbReference type="FunFam" id="3.30.460.30:FF:000001">
    <property type="entry name" value="Glutamyl-tRNA reductase"/>
    <property type="match status" value="1"/>
</dbReference>
<dbReference type="FunFam" id="3.40.50.720:FF:000031">
    <property type="entry name" value="Glutamyl-tRNA reductase"/>
    <property type="match status" value="1"/>
</dbReference>
<dbReference type="Gene3D" id="3.30.460.30">
    <property type="entry name" value="Glutamyl-tRNA reductase, N-terminal domain"/>
    <property type="match status" value="1"/>
</dbReference>
<dbReference type="Gene3D" id="3.40.50.720">
    <property type="entry name" value="NAD(P)-binding Rossmann-like Domain"/>
    <property type="match status" value="1"/>
</dbReference>
<dbReference type="HAMAP" id="MF_00087">
    <property type="entry name" value="Glu_tRNA_reductase"/>
    <property type="match status" value="1"/>
</dbReference>
<dbReference type="InterPro" id="IPR000343">
    <property type="entry name" value="4pyrrol_synth_GluRdtase"/>
</dbReference>
<dbReference type="InterPro" id="IPR015895">
    <property type="entry name" value="4pyrrol_synth_GluRdtase_N"/>
</dbReference>
<dbReference type="InterPro" id="IPR018214">
    <property type="entry name" value="GluRdtase_CS"/>
</dbReference>
<dbReference type="InterPro" id="IPR036343">
    <property type="entry name" value="GluRdtase_N_sf"/>
</dbReference>
<dbReference type="InterPro" id="IPR036291">
    <property type="entry name" value="NAD(P)-bd_dom_sf"/>
</dbReference>
<dbReference type="InterPro" id="IPR006151">
    <property type="entry name" value="Shikm_DH/Glu-tRNA_Rdtase"/>
</dbReference>
<dbReference type="NCBIfam" id="TIGR01035">
    <property type="entry name" value="hemA"/>
    <property type="match status" value="1"/>
</dbReference>
<dbReference type="PANTHER" id="PTHR43013">
    <property type="entry name" value="GLUTAMYL-TRNA REDUCTASE"/>
    <property type="match status" value="1"/>
</dbReference>
<dbReference type="PANTHER" id="PTHR43013:SF1">
    <property type="entry name" value="GLUTAMYL-TRNA REDUCTASE"/>
    <property type="match status" value="1"/>
</dbReference>
<dbReference type="Pfam" id="PF05201">
    <property type="entry name" value="GlutR_N"/>
    <property type="match status" value="1"/>
</dbReference>
<dbReference type="Pfam" id="PF01488">
    <property type="entry name" value="Shikimate_DH"/>
    <property type="match status" value="1"/>
</dbReference>
<dbReference type="PIRSF" id="PIRSF000445">
    <property type="entry name" value="4pyrrol_synth_GluRdtase"/>
    <property type="match status" value="1"/>
</dbReference>
<dbReference type="SUPFAM" id="SSF69742">
    <property type="entry name" value="Glutamyl tRNA-reductase catalytic, N-terminal domain"/>
    <property type="match status" value="1"/>
</dbReference>
<dbReference type="SUPFAM" id="SSF51735">
    <property type="entry name" value="NAD(P)-binding Rossmann-fold domains"/>
    <property type="match status" value="1"/>
</dbReference>
<dbReference type="PROSITE" id="PS00747">
    <property type="entry name" value="GLUTR"/>
    <property type="match status" value="1"/>
</dbReference>
<evidence type="ECO:0000255" key="1">
    <source>
        <dbReference type="HAMAP-Rule" id="MF_00087"/>
    </source>
</evidence>
<comment type="function">
    <text evidence="1">Catalyzes the NADPH-dependent reduction of glutamyl-tRNA(Glu) to glutamate 1-semialdehyde (GSA).</text>
</comment>
<comment type="catalytic activity">
    <reaction evidence="1">
        <text>(S)-4-amino-5-oxopentanoate + tRNA(Glu) + NADP(+) = L-glutamyl-tRNA(Glu) + NADPH + H(+)</text>
        <dbReference type="Rhea" id="RHEA:12344"/>
        <dbReference type="Rhea" id="RHEA-COMP:9663"/>
        <dbReference type="Rhea" id="RHEA-COMP:9680"/>
        <dbReference type="ChEBI" id="CHEBI:15378"/>
        <dbReference type="ChEBI" id="CHEBI:57501"/>
        <dbReference type="ChEBI" id="CHEBI:57783"/>
        <dbReference type="ChEBI" id="CHEBI:58349"/>
        <dbReference type="ChEBI" id="CHEBI:78442"/>
        <dbReference type="ChEBI" id="CHEBI:78520"/>
        <dbReference type="EC" id="1.2.1.70"/>
    </reaction>
</comment>
<comment type="pathway">
    <text evidence="1">Porphyrin-containing compound metabolism; protoporphyrin-IX biosynthesis; 5-aminolevulinate from L-glutamyl-tRNA(Glu): step 1/2.</text>
</comment>
<comment type="subunit">
    <text evidence="1">Homodimer.</text>
</comment>
<comment type="domain">
    <text evidence="1">Possesses an unusual extended V-shaped dimeric structure with each monomer consisting of three distinct domains arranged along a curved 'spinal' alpha-helix. The N-terminal catalytic domain specifically recognizes the glutamate moiety of the substrate. The second domain is the NADPH-binding domain, and the third C-terminal domain is responsible for dimerization.</text>
</comment>
<comment type="miscellaneous">
    <text evidence="1">During catalysis, the active site Cys acts as a nucleophile attacking the alpha-carbonyl group of tRNA-bound glutamate with the formation of a thioester intermediate between enzyme and glutamate, and the concomitant release of tRNA(Glu). The thioester intermediate is finally reduced by direct hydride transfer from NADPH, to form the product GSA.</text>
</comment>
<comment type="similarity">
    <text evidence="1">Belongs to the glutamyl-tRNA reductase family.</text>
</comment>
<accession>O67314</accession>
<keyword id="KW-0521">NADP</keyword>
<keyword id="KW-0560">Oxidoreductase</keyword>
<keyword id="KW-0627">Porphyrin biosynthesis</keyword>
<keyword id="KW-1185">Reference proteome</keyword>
<proteinExistence type="inferred from homology"/>
<sequence length="406" mass="46648">MGEIFVAGVNFKVAPVEVREKLACSLEETKKVLPILKRETPLEEVMLLSTCNRVEVYAYNFVENSEDLINKLLEIKRLNPSFKRYFFVKRGEEAVYHIFKVASSLDSMVIGEPQIVAQFKEAYRVAKEAGTVGKILNRVYEKALRASKRVRTETGISRSAVSVSYAAVELAKKIFGDLKEAKVLLIGAGEMGELAANYLRRFGAKLHITNRTYERALKLVKELSGNVLRFEELKEYLPLMDIVIVSTGAKDYILKREDFERSVRERHYEPQFVIDIAVPRNVDPEAGNVEGVFLYDIDDLKQVVEENLKERIKEAQRGEIILWDEVKKFMNWYESLKAEPYILELKASVEGKEVSPYIKKLVHRAIKEIKRNPEVADIILRIFKEVEKNEPRRKELSNVYNGTHGA</sequence>
<reference key="1">
    <citation type="journal article" date="1998" name="Nature">
        <title>The complete genome of the hyperthermophilic bacterium Aquifex aeolicus.</title>
        <authorList>
            <person name="Deckert G."/>
            <person name="Warren P.V."/>
            <person name="Gaasterland T."/>
            <person name="Young W.G."/>
            <person name="Lenox A.L."/>
            <person name="Graham D.E."/>
            <person name="Overbeek R."/>
            <person name="Snead M.A."/>
            <person name="Keller M."/>
            <person name="Aujay M."/>
            <person name="Huber R."/>
            <person name="Feldman R.A."/>
            <person name="Short J.M."/>
            <person name="Olsen G.J."/>
            <person name="Swanson R.V."/>
        </authorList>
    </citation>
    <scope>NUCLEOTIDE SEQUENCE [LARGE SCALE GENOMIC DNA]</scope>
    <source>
        <strain>VF5</strain>
    </source>
</reference>
<feature type="chain" id="PRO_0000113987" description="Glutamyl-tRNA reductase">
    <location>
        <begin position="1"/>
        <end position="406"/>
    </location>
</feature>
<feature type="active site" description="Nucleophile" evidence="1">
    <location>
        <position position="51"/>
    </location>
</feature>
<feature type="binding site" evidence="1">
    <location>
        <begin position="50"/>
        <end position="53"/>
    </location>
    <ligand>
        <name>substrate</name>
    </ligand>
</feature>
<feature type="binding site" evidence="1">
    <location>
        <position position="107"/>
    </location>
    <ligand>
        <name>substrate</name>
    </ligand>
</feature>
<feature type="binding site" evidence="1">
    <location>
        <begin position="112"/>
        <end position="114"/>
    </location>
    <ligand>
        <name>substrate</name>
    </ligand>
</feature>
<feature type="binding site" evidence="1">
    <location>
        <position position="118"/>
    </location>
    <ligand>
        <name>substrate</name>
    </ligand>
</feature>
<feature type="binding site" evidence="1">
    <location>
        <begin position="187"/>
        <end position="192"/>
    </location>
    <ligand>
        <name>NADP(+)</name>
        <dbReference type="ChEBI" id="CHEBI:58349"/>
    </ligand>
</feature>
<feature type="site" description="Important for activity" evidence="1">
    <location>
        <position position="97"/>
    </location>
</feature>
<organism>
    <name type="scientific">Aquifex aeolicus (strain VF5)</name>
    <dbReference type="NCBI Taxonomy" id="224324"/>
    <lineage>
        <taxon>Bacteria</taxon>
        <taxon>Pseudomonadati</taxon>
        <taxon>Aquificota</taxon>
        <taxon>Aquificia</taxon>
        <taxon>Aquificales</taxon>
        <taxon>Aquificaceae</taxon>
        <taxon>Aquifex</taxon>
    </lineage>
</organism>
<gene>
    <name evidence="1" type="primary">hemA</name>
    <name type="ordered locus">aq_1279</name>
</gene>
<protein>
    <recommendedName>
        <fullName evidence="1">Glutamyl-tRNA reductase</fullName>
        <shortName evidence="1">GluTR</shortName>
        <ecNumber evidence="1">1.2.1.70</ecNumber>
    </recommendedName>
</protein>
<name>HEM1_AQUAE</name>